<feature type="signal peptide" evidence="1">
    <location>
        <begin position="1"/>
        <end position="28"/>
    </location>
</feature>
<feature type="chain" id="PRO_1000069278" description="UPF0482 protein YnfB">
    <location>
        <begin position="29"/>
        <end position="113"/>
    </location>
</feature>
<dbReference type="EMBL" id="CP000802">
    <property type="protein sequence ID" value="ABV05977.1"/>
    <property type="molecule type" value="Genomic_DNA"/>
</dbReference>
<dbReference type="RefSeq" id="WP_000705211.1">
    <property type="nucleotide sequence ID" value="NC_009800.1"/>
</dbReference>
<dbReference type="KEGG" id="ecx:EcHS_A1656"/>
<dbReference type="HOGENOM" id="CLU_167574_0_0_6"/>
<dbReference type="HAMAP" id="MF_01581">
    <property type="entry name" value="UPF0482"/>
    <property type="match status" value="1"/>
</dbReference>
<dbReference type="InterPro" id="IPR009700">
    <property type="entry name" value="DUF1283"/>
</dbReference>
<dbReference type="NCBIfam" id="NF010180">
    <property type="entry name" value="PRK13659.1"/>
    <property type="match status" value="1"/>
</dbReference>
<dbReference type="Pfam" id="PF06932">
    <property type="entry name" value="DUF1283"/>
    <property type="match status" value="1"/>
</dbReference>
<comment type="similarity">
    <text evidence="1">Belongs to the UPF0482 family.</text>
</comment>
<proteinExistence type="inferred from homology"/>
<sequence length="113" mass="12909">MKITLSKRIGLLAILLPCALALSTTVHAETNKLVIESGDSAQSRQHAAMEKEQWNDTRNLRQKVNKRTEKEWDKADAAFDNRDKCEQSANINAYWEPNTLRCLDRRTGRVITP</sequence>
<protein>
    <recommendedName>
        <fullName evidence="1">UPF0482 protein YnfB</fullName>
    </recommendedName>
</protein>
<name>YNFB_ECOHS</name>
<reference key="1">
    <citation type="journal article" date="2008" name="J. Bacteriol.">
        <title>The pangenome structure of Escherichia coli: comparative genomic analysis of E. coli commensal and pathogenic isolates.</title>
        <authorList>
            <person name="Rasko D.A."/>
            <person name="Rosovitz M.J."/>
            <person name="Myers G.S.A."/>
            <person name="Mongodin E.F."/>
            <person name="Fricke W.F."/>
            <person name="Gajer P."/>
            <person name="Crabtree J."/>
            <person name="Sebaihia M."/>
            <person name="Thomson N.R."/>
            <person name="Chaudhuri R."/>
            <person name="Henderson I.R."/>
            <person name="Sperandio V."/>
            <person name="Ravel J."/>
        </authorList>
    </citation>
    <scope>NUCLEOTIDE SEQUENCE [LARGE SCALE GENOMIC DNA]</scope>
    <source>
        <strain>HS</strain>
    </source>
</reference>
<evidence type="ECO:0000255" key="1">
    <source>
        <dbReference type="HAMAP-Rule" id="MF_01581"/>
    </source>
</evidence>
<accession>A8A0C3</accession>
<organism>
    <name type="scientific">Escherichia coli O9:H4 (strain HS)</name>
    <dbReference type="NCBI Taxonomy" id="331112"/>
    <lineage>
        <taxon>Bacteria</taxon>
        <taxon>Pseudomonadati</taxon>
        <taxon>Pseudomonadota</taxon>
        <taxon>Gammaproteobacteria</taxon>
        <taxon>Enterobacterales</taxon>
        <taxon>Enterobacteriaceae</taxon>
        <taxon>Escherichia</taxon>
    </lineage>
</organism>
<keyword id="KW-0732">Signal</keyword>
<gene>
    <name evidence="1" type="primary">ynfB</name>
    <name type="ordered locus">EcHS_A1656</name>
</gene>